<organism>
    <name type="scientific">Saccharomyces cerevisiae (strain ATCC 204508 / S288c)</name>
    <name type="common">Baker's yeast</name>
    <dbReference type="NCBI Taxonomy" id="559292"/>
    <lineage>
        <taxon>Eukaryota</taxon>
        <taxon>Fungi</taxon>
        <taxon>Dikarya</taxon>
        <taxon>Ascomycota</taxon>
        <taxon>Saccharomycotina</taxon>
        <taxon>Saccharomycetes</taxon>
        <taxon>Saccharomycetales</taxon>
        <taxon>Saccharomycetaceae</taxon>
        <taxon>Saccharomyces</taxon>
    </lineage>
</organism>
<sequence>MSSDSLTPKDTIVPEEQTNQLRQPDLDEDSIHYDPEADDLESLETTASYASTSVSAKVYTKKEVNKGTDIESQPHWGENTSSTHDSDKEEDSNEEIESFPEGGFKAWVVTFGCFLGLIACFGLLNSTGVIESHLQDNQLSSESVSTIGWLFSLFLFVCSASCIISGTYFDRNGFRTIMIVGTVFHVAGLFATANSTKYWHFILSFAIVCGFGNGIVLSPLVSVPAHYFFKRRGTALAMATIGGSVGGVVFPIMLRSFFSMKSDTDPTYGFVWGIRTLGFLDLALLTLSIILVKERLPHVIENSKDGESRWRYILRVYILQCFDAKAFLDMKYLFCVLGTVFSELSINSALTYYGSYATSHGISANDAYTLIMIINVCGIPGRWVPGYLSDKFGRFNVAIATLLTLFIVMFVGWLPFGTNLTNMYVISALYGFCSGSVFSLLPVCCGQISKTEEFGKRYSTMYFVVGFGTLVGIPITGAIISIKTTADYQHYIIFCGLATFVSAVCYIISRAYCVGFKWVRF</sequence>
<gene>
    <name type="primary">MCH5</name>
    <name type="ordered locus">YOR306C</name>
</gene>
<evidence type="ECO:0000255" key="1"/>
<evidence type="ECO:0000256" key="2">
    <source>
        <dbReference type="SAM" id="MobiDB-lite"/>
    </source>
</evidence>
<evidence type="ECO:0000269" key="3">
    <source>
    </source>
</evidence>
<evidence type="ECO:0000305" key="4"/>
<comment type="function">
    <text evidence="3">Riboflavin transporter involved in riboflavin (vitamin B2) uptake. Does not act in the transport of monocarboxylic acids across the plasma membrane.</text>
</comment>
<comment type="biophysicochemical properties">
    <kinetics>
        <KM evidence="3">17 uM for riboflavin</KM>
    </kinetics>
    <phDependence>
        <text evidence="3">Optimum pH is 7.5.</text>
    </phDependence>
</comment>
<comment type="subcellular location">
    <subcellularLocation>
        <location evidence="4">Cell membrane</location>
        <topology evidence="4">Multi-pass membrane protein</topology>
    </subcellularLocation>
</comment>
<comment type="similarity">
    <text evidence="4">Belongs to the major facilitator superfamily. Monocarboxylate porter (TC 2.A.1.13) family.</text>
</comment>
<reference key="1">
    <citation type="journal article" date="1997" name="Yeast">
        <title>Sequence and analysis of a 36.2 kb fragment from the right arm of yeast chromosome XV reveals 19 open reading frames including SNF2 (5' end), CPA1, SLY41, a putative transport ATPase, a putative ribosomal protein and an SNF2 homologue.</title>
        <authorList>
            <person name="Poirey R."/>
            <person name="Cziepluch C."/>
            <person name="Tobiasch E."/>
            <person name="Pujol A."/>
            <person name="Kordes E."/>
            <person name="Jauniaux J.-C."/>
        </authorList>
    </citation>
    <scope>NUCLEOTIDE SEQUENCE [GENOMIC DNA]</scope>
</reference>
<reference key="2">
    <citation type="journal article" date="1997" name="Nature">
        <title>The nucleotide sequence of Saccharomyces cerevisiae chromosome XV.</title>
        <authorList>
            <person name="Dujon B."/>
            <person name="Albermann K."/>
            <person name="Aldea M."/>
            <person name="Alexandraki D."/>
            <person name="Ansorge W."/>
            <person name="Arino J."/>
            <person name="Benes V."/>
            <person name="Bohn C."/>
            <person name="Bolotin-Fukuhara M."/>
            <person name="Bordonne R."/>
            <person name="Boyer J."/>
            <person name="Camasses A."/>
            <person name="Casamayor A."/>
            <person name="Casas C."/>
            <person name="Cheret G."/>
            <person name="Cziepluch C."/>
            <person name="Daignan-Fornier B."/>
            <person name="Dang V.-D."/>
            <person name="de Haan M."/>
            <person name="Delius H."/>
            <person name="Durand P."/>
            <person name="Fairhead C."/>
            <person name="Feldmann H."/>
            <person name="Gaillon L."/>
            <person name="Galisson F."/>
            <person name="Gamo F.-J."/>
            <person name="Gancedo C."/>
            <person name="Goffeau A."/>
            <person name="Goulding S.E."/>
            <person name="Grivell L.A."/>
            <person name="Habbig B."/>
            <person name="Hand N.J."/>
            <person name="Hani J."/>
            <person name="Hattenhorst U."/>
            <person name="Hebling U."/>
            <person name="Hernando Y."/>
            <person name="Herrero E."/>
            <person name="Heumann K."/>
            <person name="Hiesel R."/>
            <person name="Hilger F."/>
            <person name="Hofmann B."/>
            <person name="Hollenberg C.P."/>
            <person name="Hughes B."/>
            <person name="Jauniaux J.-C."/>
            <person name="Kalogeropoulos A."/>
            <person name="Katsoulou C."/>
            <person name="Kordes E."/>
            <person name="Lafuente M.J."/>
            <person name="Landt O."/>
            <person name="Louis E.J."/>
            <person name="Maarse A.C."/>
            <person name="Madania A."/>
            <person name="Mannhaupt G."/>
            <person name="Marck C."/>
            <person name="Martin R.P."/>
            <person name="Mewes H.-W."/>
            <person name="Michaux G."/>
            <person name="Paces V."/>
            <person name="Parle-McDermott A.G."/>
            <person name="Pearson B.M."/>
            <person name="Perrin A."/>
            <person name="Pettersson B."/>
            <person name="Poch O."/>
            <person name="Pohl T.M."/>
            <person name="Poirey R."/>
            <person name="Portetelle D."/>
            <person name="Pujol A."/>
            <person name="Purnelle B."/>
            <person name="Ramezani Rad M."/>
            <person name="Rechmann S."/>
            <person name="Schwager C."/>
            <person name="Schweizer M."/>
            <person name="Sor F."/>
            <person name="Sterky F."/>
            <person name="Tarassov I.A."/>
            <person name="Teodoru C."/>
            <person name="Tettelin H."/>
            <person name="Thierry A."/>
            <person name="Tobiasch E."/>
            <person name="Tzermia M."/>
            <person name="Uhlen M."/>
            <person name="Unseld M."/>
            <person name="Valens M."/>
            <person name="Vandenbol M."/>
            <person name="Vetter I."/>
            <person name="Vlcek C."/>
            <person name="Voet M."/>
            <person name="Volckaert G."/>
            <person name="Voss H."/>
            <person name="Wambutt R."/>
            <person name="Wedler H."/>
            <person name="Wiemann S."/>
            <person name="Winsor B."/>
            <person name="Wolfe K.H."/>
            <person name="Zollner A."/>
            <person name="Zumstein E."/>
            <person name="Kleine K."/>
        </authorList>
    </citation>
    <scope>NUCLEOTIDE SEQUENCE [LARGE SCALE GENOMIC DNA]</scope>
    <source>
        <strain>ATCC 204508 / S288c</strain>
    </source>
</reference>
<reference key="3">
    <citation type="journal article" date="2014" name="G3 (Bethesda)">
        <title>The reference genome sequence of Saccharomyces cerevisiae: Then and now.</title>
        <authorList>
            <person name="Engel S.R."/>
            <person name="Dietrich F.S."/>
            <person name="Fisk D.G."/>
            <person name="Binkley G."/>
            <person name="Balakrishnan R."/>
            <person name="Costanzo M.C."/>
            <person name="Dwight S.S."/>
            <person name="Hitz B.C."/>
            <person name="Karra K."/>
            <person name="Nash R.S."/>
            <person name="Weng S."/>
            <person name="Wong E.D."/>
            <person name="Lloyd P."/>
            <person name="Skrzypek M.S."/>
            <person name="Miyasato S.R."/>
            <person name="Simison M."/>
            <person name="Cherry J.M."/>
        </authorList>
    </citation>
    <scope>GENOME REANNOTATION</scope>
    <scope>SEQUENCE REVISION TO 495</scope>
    <source>
        <strain>ATCC 204508 / S288c</strain>
    </source>
</reference>
<reference key="4">
    <citation type="journal article" date="2001" name="Yeast">
        <title>The putative monocarboxylate permeases of the yeast Saccharomyces cerevisiae do not transport monocarboxylic acids across the plasma membrane.</title>
        <authorList>
            <person name="Makuc J."/>
            <person name="Paiva S."/>
            <person name="Schauen M."/>
            <person name="Kramer R."/>
            <person name="Andre B."/>
            <person name="Casal M."/>
            <person name="Leao C."/>
            <person name="Boles E."/>
        </authorList>
    </citation>
    <scope>LACK OF FUNCTION AS A MONOCARBOXYLATE TRANSPORTER</scope>
</reference>
<reference key="5">
    <citation type="journal article" date="2005" name="J. Biol. Chem.">
        <title>The monocarboxylate transporter homolog Mch5p catalyzes riboflavin (vitamin B2) uptake in Saccharomyces cerevisiae.</title>
        <authorList>
            <person name="Reihl P."/>
            <person name="Stolz J."/>
        </authorList>
    </citation>
    <scope>FUNCTION</scope>
    <scope>BIOPHYSICOCHEMICAL PROPERTIES</scope>
    <scope>INDUCTION</scope>
</reference>
<reference key="6">
    <citation type="journal article" date="2006" name="Proc. Natl. Acad. Sci. U.S.A.">
        <title>A global topology map of the Saccharomyces cerevisiae membrane proteome.</title>
        <authorList>
            <person name="Kim H."/>
            <person name="Melen K."/>
            <person name="Oesterberg M."/>
            <person name="von Heijne G."/>
        </authorList>
    </citation>
    <scope>TOPOLOGY [LARGE SCALE ANALYSIS]</scope>
    <source>
        <strain>ATCC 208353 / W303-1A</strain>
    </source>
</reference>
<feature type="chain" id="PRO_0000257810" description="Riboflavin transporter MCH5">
    <location>
        <begin position="1"/>
        <end position="521"/>
    </location>
</feature>
<feature type="topological domain" description="Cytoplasmic" evidence="1">
    <location>
        <begin position="1"/>
        <end position="103"/>
    </location>
</feature>
<feature type="transmembrane region" description="Helical" evidence="1">
    <location>
        <begin position="104"/>
        <end position="124"/>
    </location>
</feature>
<feature type="topological domain" description="Extracellular" evidence="1">
    <location>
        <begin position="125"/>
        <end position="143"/>
    </location>
</feature>
<feature type="transmembrane region" description="Helical" evidence="1">
    <location>
        <begin position="144"/>
        <end position="164"/>
    </location>
</feature>
<feature type="topological domain" description="Cytoplasmic" evidence="1">
    <location>
        <begin position="165"/>
        <end position="172"/>
    </location>
</feature>
<feature type="transmembrane region" description="Helical" evidence="1">
    <location>
        <begin position="173"/>
        <end position="193"/>
    </location>
</feature>
<feature type="topological domain" description="Extracellular" evidence="1">
    <location>
        <begin position="194"/>
        <end position="200"/>
    </location>
</feature>
<feature type="transmembrane region" description="Helical" evidence="1">
    <location>
        <begin position="201"/>
        <end position="221"/>
    </location>
</feature>
<feature type="topological domain" description="Cytoplasmic" evidence="1">
    <location>
        <begin position="222"/>
        <end position="233"/>
    </location>
</feature>
<feature type="transmembrane region" description="Helical" evidence="1">
    <location>
        <begin position="234"/>
        <end position="254"/>
    </location>
</feature>
<feature type="topological domain" description="Extracellular" evidence="1">
    <location>
        <begin position="255"/>
        <end position="269"/>
    </location>
</feature>
<feature type="transmembrane region" description="Helical" evidence="1">
    <location>
        <begin position="270"/>
        <end position="290"/>
    </location>
</feature>
<feature type="topological domain" description="Cytoplasmic" evidence="1">
    <location>
        <begin position="291"/>
        <end position="325"/>
    </location>
</feature>
<feature type="transmembrane region" description="Helical" evidence="1">
    <location>
        <begin position="326"/>
        <end position="346"/>
    </location>
</feature>
<feature type="topological domain" description="Extracellular" evidence="1">
    <location>
        <begin position="347"/>
        <end position="367"/>
    </location>
</feature>
<feature type="transmembrane region" description="Helical" evidence="1">
    <location>
        <begin position="368"/>
        <end position="388"/>
    </location>
</feature>
<feature type="topological domain" description="Cytoplasmic" evidence="1">
    <location>
        <begin position="389"/>
        <end position="396"/>
    </location>
</feature>
<feature type="transmembrane region" description="Helical" evidence="1">
    <location>
        <begin position="397"/>
        <end position="417"/>
    </location>
</feature>
<feature type="topological domain" description="Extracellular" evidence="1">
    <location>
        <begin position="418"/>
        <end position="422"/>
    </location>
</feature>
<feature type="transmembrane region" description="Helical" evidence="1">
    <location>
        <begin position="423"/>
        <end position="443"/>
    </location>
</feature>
<feature type="topological domain" description="Cytoplasmic" evidence="1">
    <location>
        <begin position="444"/>
        <end position="461"/>
    </location>
</feature>
<feature type="transmembrane region" description="Helical" evidence="1">
    <location>
        <begin position="462"/>
        <end position="482"/>
    </location>
</feature>
<feature type="topological domain" description="Extracellular" evidence="1">
    <location>
        <begin position="483"/>
        <end position="487"/>
    </location>
</feature>
<feature type="transmembrane region" description="Helical" evidence="1">
    <location>
        <begin position="488"/>
        <end position="508"/>
    </location>
</feature>
<feature type="topological domain" description="Cytoplasmic" evidence="1">
    <location>
        <begin position="509"/>
        <end position="521"/>
    </location>
</feature>
<feature type="region of interest" description="Disordered" evidence="2">
    <location>
        <begin position="1"/>
        <end position="33"/>
    </location>
</feature>
<feature type="region of interest" description="Disordered" evidence="2">
    <location>
        <begin position="65"/>
        <end position="96"/>
    </location>
</feature>
<feature type="glycosylation site" description="N-linked (GlcNAc...) asparagine" evidence="1">
    <location>
        <position position="125"/>
    </location>
</feature>
<feature type="glycosylation site" description="N-linked (GlcNAc...) asparagine" evidence="1">
    <location>
        <position position="194"/>
    </location>
</feature>
<feature type="glycosylation site" description="N-linked (GlcNAc...) asparagine" evidence="1">
    <location>
        <position position="419"/>
    </location>
</feature>
<feature type="sequence conflict" description="In Ref. 1 and 2; CAA99626." evidence="4" ref="1 2">
    <original>C</original>
    <variation>S</variation>
    <location>
        <position position="495"/>
    </location>
</feature>
<dbReference type="EMBL" id="Z75214">
    <property type="protein sequence ID" value="CAA99626.1"/>
    <property type="molecule type" value="Genomic_DNA"/>
</dbReference>
<dbReference type="EMBL" id="BK006948">
    <property type="protein sequence ID" value="DAA11072.2"/>
    <property type="molecule type" value="Genomic_DNA"/>
</dbReference>
<dbReference type="PIR" id="S67210">
    <property type="entry name" value="S67210"/>
</dbReference>
<dbReference type="RefSeq" id="NP_014951.4">
    <property type="nucleotide sequence ID" value="NM_001183726.4"/>
</dbReference>
<dbReference type="SMR" id="Q08777"/>
<dbReference type="BioGRID" id="34695">
    <property type="interactions" value="30"/>
</dbReference>
<dbReference type="FunCoup" id="Q08777">
    <property type="interactions" value="273"/>
</dbReference>
<dbReference type="IntAct" id="Q08777">
    <property type="interactions" value="2"/>
</dbReference>
<dbReference type="MINT" id="Q08777"/>
<dbReference type="STRING" id="4932.YOR306C"/>
<dbReference type="TCDB" id="2.A.1.13.4">
    <property type="family name" value="the major facilitator superfamily (mfs)"/>
</dbReference>
<dbReference type="GlyCosmos" id="Q08777">
    <property type="glycosylation" value="3 sites, No reported glycans"/>
</dbReference>
<dbReference type="GlyGen" id="Q08777">
    <property type="glycosylation" value="3 sites"/>
</dbReference>
<dbReference type="iPTMnet" id="Q08777"/>
<dbReference type="PaxDb" id="4932-YOR306C"/>
<dbReference type="PeptideAtlas" id="Q08777"/>
<dbReference type="EnsemblFungi" id="YOR306C_mRNA">
    <property type="protein sequence ID" value="YOR306C"/>
    <property type="gene ID" value="YOR306C"/>
</dbReference>
<dbReference type="GeneID" id="854483"/>
<dbReference type="KEGG" id="sce:YOR306C"/>
<dbReference type="AGR" id="SGD:S000005833"/>
<dbReference type="SGD" id="S000005833">
    <property type="gene designation" value="MCH5"/>
</dbReference>
<dbReference type="VEuPathDB" id="FungiDB:YOR306C"/>
<dbReference type="eggNOG" id="KOG2504">
    <property type="taxonomic scope" value="Eukaryota"/>
</dbReference>
<dbReference type="GeneTree" id="ENSGT00940000176470"/>
<dbReference type="HOGENOM" id="CLU_001265_1_0_1"/>
<dbReference type="InParanoid" id="Q08777"/>
<dbReference type="OMA" id="TFFCGVQ"/>
<dbReference type="OrthoDB" id="6509908at2759"/>
<dbReference type="BioCyc" id="YEAST:G3O-33790-MONOMER"/>
<dbReference type="Reactome" id="R-SCE-352230">
    <property type="pathway name" value="Amino acid transport across the plasma membrane"/>
</dbReference>
<dbReference type="Reactome" id="R-SCE-879518">
    <property type="pathway name" value="Transport of organic anions"/>
</dbReference>
<dbReference type="BioGRID-ORCS" id="854483">
    <property type="hits" value="2 hits in 10 CRISPR screens"/>
</dbReference>
<dbReference type="PRO" id="PR:Q08777"/>
<dbReference type="Proteomes" id="UP000002311">
    <property type="component" value="Chromosome XV"/>
</dbReference>
<dbReference type="RNAct" id="Q08777">
    <property type="molecule type" value="protein"/>
</dbReference>
<dbReference type="GO" id="GO:0005886">
    <property type="term" value="C:plasma membrane"/>
    <property type="evidence" value="ECO:0000314"/>
    <property type="project" value="SGD"/>
</dbReference>
<dbReference type="GO" id="GO:0032217">
    <property type="term" value="F:riboflavin transmembrane transporter activity"/>
    <property type="evidence" value="ECO:0000316"/>
    <property type="project" value="SGD"/>
</dbReference>
<dbReference type="GO" id="GO:0022857">
    <property type="term" value="F:transmembrane transporter activity"/>
    <property type="evidence" value="ECO:0000318"/>
    <property type="project" value="GO_Central"/>
</dbReference>
<dbReference type="GO" id="GO:0032218">
    <property type="term" value="P:riboflavin transport"/>
    <property type="evidence" value="ECO:0000316"/>
    <property type="project" value="SGD"/>
</dbReference>
<dbReference type="CDD" id="cd17352">
    <property type="entry name" value="MFS_MCT_SLC16"/>
    <property type="match status" value="1"/>
</dbReference>
<dbReference type="Gene3D" id="1.20.1250.20">
    <property type="entry name" value="MFS general substrate transporter like domains"/>
    <property type="match status" value="1"/>
</dbReference>
<dbReference type="InterPro" id="IPR011701">
    <property type="entry name" value="MFS"/>
</dbReference>
<dbReference type="InterPro" id="IPR020846">
    <property type="entry name" value="MFS_dom"/>
</dbReference>
<dbReference type="InterPro" id="IPR036259">
    <property type="entry name" value="MFS_trans_sf"/>
</dbReference>
<dbReference type="InterPro" id="IPR050327">
    <property type="entry name" value="Proton-linked_MCT"/>
</dbReference>
<dbReference type="PANTHER" id="PTHR11360">
    <property type="entry name" value="MONOCARBOXYLATE TRANSPORTER"/>
    <property type="match status" value="1"/>
</dbReference>
<dbReference type="PANTHER" id="PTHR11360:SF177">
    <property type="entry name" value="RIBOFLAVIN TRANSPORTER MCH5"/>
    <property type="match status" value="1"/>
</dbReference>
<dbReference type="Pfam" id="PF07690">
    <property type="entry name" value="MFS_1"/>
    <property type="match status" value="1"/>
</dbReference>
<dbReference type="SUPFAM" id="SSF103473">
    <property type="entry name" value="MFS general substrate transporter"/>
    <property type="match status" value="1"/>
</dbReference>
<dbReference type="PROSITE" id="PS50850">
    <property type="entry name" value="MFS"/>
    <property type="match status" value="1"/>
</dbReference>
<protein>
    <recommendedName>
        <fullName>Riboflavin transporter MCH5</fullName>
    </recommendedName>
</protein>
<accession>Q08777</accession>
<accession>D6W306</accession>
<name>MCH5_YEAST</name>
<keyword id="KW-1003">Cell membrane</keyword>
<keyword id="KW-0325">Glycoprotein</keyword>
<keyword id="KW-0472">Membrane</keyword>
<keyword id="KW-1185">Reference proteome</keyword>
<keyword id="KW-0812">Transmembrane</keyword>
<keyword id="KW-1133">Transmembrane helix</keyword>
<keyword id="KW-0813">Transport</keyword>
<proteinExistence type="evidence at protein level"/>